<accession>Q975Y9</accession>
<proteinExistence type="inferred from homology"/>
<dbReference type="EC" id="6.3.4.23" evidence="2"/>
<dbReference type="EMBL" id="BA000023">
    <property type="protein sequence ID" value="BAB65259.1"/>
    <property type="molecule type" value="Genomic_DNA"/>
</dbReference>
<dbReference type="RefSeq" id="WP_010978242.1">
    <property type="nucleotide sequence ID" value="NC_003106.2"/>
</dbReference>
<dbReference type="SMR" id="Q975Y9"/>
<dbReference type="STRING" id="273063.STK_02890"/>
<dbReference type="GeneID" id="1458194"/>
<dbReference type="KEGG" id="sto:STK_02890"/>
<dbReference type="PATRIC" id="fig|273063.9.peg.343"/>
<dbReference type="eggNOG" id="arCOG04346">
    <property type="taxonomic scope" value="Archaea"/>
</dbReference>
<dbReference type="OrthoDB" id="98133at2157"/>
<dbReference type="UniPathway" id="UPA00074">
    <property type="reaction ID" value="UER00134"/>
</dbReference>
<dbReference type="Proteomes" id="UP000001015">
    <property type="component" value="Chromosome"/>
</dbReference>
<dbReference type="GO" id="GO:0005524">
    <property type="term" value="F:ATP binding"/>
    <property type="evidence" value="ECO:0007669"/>
    <property type="project" value="UniProtKB-KW"/>
</dbReference>
<dbReference type="GO" id="GO:0016879">
    <property type="term" value="F:ligase activity, forming carbon-nitrogen bonds"/>
    <property type="evidence" value="ECO:0007669"/>
    <property type="project" value="UniProtKB-UniRule"/>
</dbReference>
<dbReference type="GO" id="GO:0000287">
    <property type="term" value="F:magnesium ion binding"/>
    <property type="evidence" value="ECO:0007669"/>
    <property type="project" value="InterPro"/>
</dbReference>
<dbReference type="GO" id="GO:0006189">
    <property type="term" value="P:'de novo' IMP biosynthetic process"/>
    <property type="evidence" value="ECO:0007669"/>
    <property type="project" value="UniProtKB-UniRule"/>
</dbReference>
<dbReference type="Gene3D" id="3.40.50.20">
    <property type="match status" value="1"/>
</dbReference>
<dbReference type="Gene3D" id="3.30.1490.20">
    <property type="entry name" value="ATP-grasp fold, A domain"/>
    <property type="match status" value="1"/>
</dbReference>
<dbReference type="Gene3D" id="3.30.470.20">
    <property type="entry name" value="ATP-grasp fold, B domain"/>
    <property type="match status" value="1"/>
</dbReference>
<dbReference type="HAMAP" id="MF_01163">
    <property type="entry name" value="IMP_biosynth_PurP"/>
    <property type="match status" value="1"/>
</dbReference>
<dbReference type="InterPro" id="IPR011761">
    <property type="entry name" value="ATP-grasp"/>
</dbReference>
<dbReference type="InterPro" id="IPR013815">
    <property type="entry name" value="ATP_grasp_subdomain_1"/>
</dbReference>
<dbReference type="InterPro" id="IPR023656">
    <property type="entry name" value="IMP_biosynth_PurP"/>
</dbReference>
<dbReference type="InterPro" id="IPR009720">
    <property type="entry name" value="IMP_biosynth_PurP_C"/>
</dbReference>
<dbReference type="InterPro" id="IPR010672">
    <property type="entry name" value="IMP_biosynth_PurP_N"/>
</dbReference>
<dbReference type="InterPro" id="IPR016185">
    <property type="entry name" value="PreATP-grasp_dom_sf"/>
</dbReference>
<dbReference type="NCBIfam" id="NF009778">
    <property type="entry name" value="PRK13278.1-1"/>
    <property type="match status" value="1"/>
</dbReference>
<dbReference type="PANTHER" id="PTHR38147:SF2">
    <property type="entry name" value="5-FORMAMINOIMIDAZOLE-4-CARBOXAMIDE-1-(BETA)-D-RIBOFURANOSYL 5'-MONOPHOSPHATE SYNTHETASE"/>
    <property type="match status" value="1"/>
</dbReference>
<dbReference type="PANTHER" id="PTHR38147">
    <property type="entry name" value="5-FORMAMINOIMIDAZOLE-4-CARBOXAMIDE-1-(BETA)-D-RIBOFURANOSYL 5'-MONOPHOSPHATE SYNTHETASE-RELATED"/>
    <property type="match status" value="1"/>
</dbReference>
<dbReference type="Pfam" id="PF06849">
    <property type="entry name" value="DUF1246"/>
    <property type="match status" value="1"/>
</dbReference>
<dbReference type="Pfam" id="PF06973">
    <property type="entry name" value="DUF1297"/>
    <property type="match status" value="1"/>
</dbReference>
<dbReference type="PIRSF" id="PIRSF004602">
    <property type="entry name" value="ATPgrasp_PurP"/>
    <property type="match status" value="1"/>
</dbReference>
<dbReference type="SUPFAM" id="SSF56059">
    <property type="entry name" value="Glutathione synthetase ATP-binding domain-like"/>
    <property type="match status" value="1"/>
</dbReference>
<dbReference type="SUPFAM" id="SSF52440">
    <property type="entry name" value="PreATP-grasp domain"/>
    <property type="match status" value="1"/>
</dbReference>
<dbReference type="PROSITE" id="PS50975">
    <property type="entry name" value="ATP_GRASP"/>
    <property type="match status" value="1"/>
</dbReference>
<evidence type="ECO:0000250" key="1"/>
<evidence type="ECO:0000255" key="2">
    <source>
        <dbReference type="HAMAP-Rule" id="MF_01163"/>
    </source>
</evidence>
<organism>
    <name type="scientific">Sulfurisphaera tokodaii (strain DSM 16993 / JCM 10545 / NBRC 100140 / 7)</name>
    <name type="common">Sulfolobus tokodaii</name>
    <dbReference type="NCBI Taxonomy" id="273063"/>
    <lineage>
        <taxon>Archaea</taxon>
        <taxon>Thermoproteota</taxon>
        <taxon>Thermoprotei</taxon>
        <taxon>Sulfolobales</taxon>
        <taxon>Sulfolobaceae</taxon>
        <taxon>Sulfurisphaera</taxon>
    </lineage>
</organism>
<comment type="function">
    <text evidence="2">Catalyzes the ATP- and formate-dependent formylation of 5-aminoimidazole-4-carboxamide-1-beta-d-ribofuranosyl 5'-monophosphate (AICAR) to 5-formaminoimidazole-4-carboxamide-1-beta-d-ribofuranosyl 5'-monophosphate (FAICAR) in the absence of folates.</text>
</comment>
<comment type="catalytic activity">
    <reaction evidence="2">
        <text>5-amino-1-(5-phospho-beta-D-ribosyl)imidazole-4-carboxamide + formate + ATP = 5-formamido-1-(5-phospho-D-ribosyl)imidazole-4-carboxamide + ADP + phosphate</text>
        <dbReference type="Rhea" id="RHEA:24836"/>
        <dbReference type="ChEBI" id="CHEBI:15740"/>
        <dbReference type="ChEBI" id="CHEBI:30616"/>
        <dbReference type="ChEBI" id="CHEBI:43474"/>
        <dbReference type="ChEBI" id="CHEBI:58467"/>
        <dbReference type="ChEBI" id="CHEBI:58475"/>
        <dbReference type="ChEBI" id="CHEBI:456216"/>
        <dbReference type="EC" id="6.3.4.23"/>
    </reaction>
</comment>
<comment type="cofactor">
    <cofactor evidence="1">
        <name>Mg(2+)</name>
        <dbReference type="ChEBI" id="CHEBI:18420"/>
    </cofactor>
    <cofactor evidence="1">
        <name>Mn(2+)</name>
        <dbReference type="ChEBI" id="CHEBI:29035"/>
    </cofactor>
    <text evidence="1">Binds 1 Mg(2+) or Mn(2+) ion per subunit.</text>
</comment>
<comment type="pathway">
    <text evidence="2">Purine metabolism; IMP biosynthesis via de novo pathway; 5-formamido-1-(5-phospho-D-ribosyl)imidazole-4-carboxamide from 5-amino-1-(5-phospho-D-ribosyl)imidazole-4-carboxamide (formate route): step 1/1.</text>
</comment>
<comment type="similarity">
    <text evidence="2">Belongs to the phosphohexose mutase family.</text>
</comment>
<gene>
    <name evidence="2" type="primary">purP</name>
    <name type="ordered locus">STK_02890</name>
</gene>
<reference key="1">
    <citation type="journal article" date="2001" name="DNA Res.">
        <title>Complete genome sequence of an aerobic thermoacidophilic Crenarchaeon, Sulfolobus tokodaii strain7.</title>
        <authorList>
            <person name="Kawarabayasi Y."/>
            <person name="Hino Y."/>
            <person name="Horikawa H."/>
            <person name="Jin-no K."/>
            <person name="Takahashi M."/>
            <person name="Sekine M."/>
            <person name="Baba S."/>
            <person name="Ankai A."/>
            <person name="Kosugi H."/>
            <person name="Hosoyama A."/>
            <person name="Fukui S."/>
            <person name="Nagai Y."/>
            <person name="Nishijima K."/>
            <person name="Otsuka R."/>
            <person name="Nakazawa H."/>
            <person name="Takamiya M."/>
            <person name="Kato Y."/>
            <person name="Yoshizawa T."/>
            <person name="Tanaka T."/>
            <person name="Kudoh Y."/>
            <person name="Yamazaki J."/>
            <person name="Kushida N."/>
            <person name="Oguchi A."/>
            <person name="Aoki K."/>
            <person name="Masuda S."/>
            <person name="Yanagii M."/>
            <person name="Nishimura M."/>
            <person name="Yamagishi A."/>
            <person name="Oshima T."/>
            <person name="Kikuchi H."/>
        </authorList>
    </citation>
    <scope>NUCLEOTIDE SEQUENCE [LARGE SCALE GENOMIC DNA]</scope>
    <source>
        <strain>DSM 16993 / JCM 10545 / NBRC 100140 / 7</strain>
    </source>
</reference>
<name>PURP_SULTO</name>
<protein>
    <recommendedName>
        <fullName evidence="2">5-formaminoimidazole-4-carboxamide-1-(beta)-D-ribofuranosyl 5'-monophosphate synthetase</fullName>
        <ecNumber evidence="2">6.3.4.23</ecNumber>
    </recommendedName>
    <alternativeName>
        <fullName evidence="2">5-aminoimidazole-4-carboxamide-1-beta-D-ribofuranosyl 5'-monophosphate--formate ligase</fullName>
    </alternativeName>
</protein>
<keyword id="KW-0067">ATP-binding</keyword>
<keyword id="KW-0436">Ligase</keyword>
<keyword id="KW-0460">Magnesium</keyword>
<keyword id="KW-0464">Manganese</keyword>
<keyword id="KW-0479">Metal-binding</keyword>
<keyword id="KW-0547">Nucleotide-binding</keyword>
<keyword id="KW-0658">Purine biosynthesis</keyword>
<keyword id="KW-1185">Reference proteome</keyword>
<sequence length="333" mass="37892">MYILTIGSHSSLQILHGAKKEGFKTALVTPEKRVKFYKQFTFIDEVYGYKNEDEAVDYINDFANNGILIPHGSLVEYIGPERVNKIKTKIFGNRNLFEWEANQKKKMSLLKSAKIKIPEQFENPEDIDRLVIIKLPGAKGGKGYFIARNKSEAKEGLNKLLEQKMIRSIDEVIIQEYVIGVPMYFQFFNSIILNRLEIMGIDIRYETNIDGLRRLPADIKIDPTLVVVGNIPAVARESLLPLVYEYGENFVNTVKELVPPGMIGPFCLESVVTDQGDIVVFEFSGRIVAGTNLYVNGSPYSWLYWDEPMSVGRRISREIKLAINSNKLEQVLT</sequence>
<feature type="chain" id="PRO_0000348641" description="5-formaminoimidazole-4-carboxamide-1-(beta)-D-ribofuranosyl 5'-monophosphate synthetase">
    <location>
        <begin position="1"/>
        <end position="333"/>
    </location>
</feature>
<feature type="domain" description="ATP-grasp" evidence="2">
    <location>
        <begin position="94"/>
        <end position="324"/>
    </location>
</feature>
<feature type="binding site" evidence="2">
    <location>
        <position position="9"/>
    </location>
    <ligand>
        <name>5-amino-1-(5-phospho-beta-D-ribosyl)imidazole-4-carboxamide</name>
        <dbReference type="ChEBI" id="CHEBI:58475"/>
    </ligand>
</feature>
<feature type="binding site" evidence="2">
    <location>
        <position position="73"/>
    </location>
    <ligand>
        <name>5-amino-1-(5-phospho-beta-D-ribosyl)imidazole-4-carboxamide</name>
        <dbReference type="ChEBI" id="CHEBI:58475"/>
    </ligand>
</feature>
<feature type="binding site" evidence="2">
    <location>
        <begin position="124"/>
        <end position="184"/>
    </location>
    <ligand>
        <name>ATP</name>
        <dbReference type="ChEBI" id="CHEBI:30616"/>
    </ligand>
</feature>
<feature type="binding site" evidence="2">
    <location>
        <position position="206"/>
    </location>
    <ligand>
        <name>ATP</name>
        <dbReference type="ChEBI" id="CHEBI:30616"/>
    </ligand>
</feature>
<feature type="binding site" evidence="2">
    <location>
        <position position="230"/>
    </location>
    <ligand>
        <name>5-amino-1-(5-phospho-beta-D-ribosyl)imidazole-4-carboxamide</name>
        <dbReference type="ChEBI" id="CHEBI:58475"/>
    </ligand>
</feature>
<feature type="binding site" evidence="2">
    <location>
        <position position="269"/>
    </location>
    <ligand>
        <name>Mg(2+)</name>
        <dbReference type="ChEBI" id="CHEBI:18420"/>
    </ligand>
</feature>
<feature type="binding site" evidence="2">
    <location>
        <position position="282"/>
    </location>
    <ligand>
        <name>Mg(2+)</name>
        <dbReference type="ChEBI" id="CHEBI:18420"/>
    </ligand>
</feature>